<comment type="subcellular location">
    <subcellularLocation>
        <location evidence="1">Cytoplasm</location>
    </subcellularLocation>
</comment>
<comment type="similarity">
    <text evidence="1">Belongs to the TACO1 family. YeeN subfamily.</text>
</comment>
<proteinExistence type="inferred from homology"/>
<evidence type="ECO:0000255" key="1">
    <source>
        <dbReference type="HAMAP-Rule" id="MF_00918"/>
    </source>
</evidence>
<reference key="1">
    <citation type="journal article" date="2007" name="PLoS ONE">
        <title>A glimpse of streptococcal toxic shock syndrome from comparative genomics of S. suis 2 Chinese isolates.</title>
        <authorList>
            <person name="Chen C."/>
            <person name="Tang J."/>
            <person name="Dong W."/>
            <person name="Wang C."/>
            <person name="Feng Y."/>
            <person name="Wang J."/>
            <person name="Zheng F."/>
            <person name="Pan X."/>
            <person name="Liu D."/>
            <person name="Li M."/>
            <person name="Song Y."/>
            <person name="Zhu X."/>
            <person name="Sun H."/>
            <person name="Feng T."/>
            <person name="Guo Z."/>
            <person name="Ju A."/>
            <person name="Ge J."/>
            <person name="Dong Y."/>
            <person name="Sun W."/>
            <person name="Jiang Y."/>
            <person name="Wang J."/>
            <person name="Yan J."/>
            <person name="Yang H."/>
            <person name="Wang X."/>
            <person name="Gao G.F."/>
            <person name="Yang R."/>
            <person name="Wang J."/>
            <person name="Yu J."/>
        </authorList>
    </citation>
    <scope>NUCLEOTIDE SEQUENCE [LARGE SCALE GENOMIC DNA]</scope>
    <source>
        <strain>05ZYH33</strain>
    </source>
</reference>
<accession>A4VTD0</accession>
<protein>
    <recommendedName>
        <fullName evidence="1">Probable transcriptional regulatory protein SSU05_0402</fullName>
    </recommendedName>
</protein>
<organism>
    <name type="scientific">Streptococcus suis (strain 05ZYH33)</name>
    <dbReference type="NCBI Taxonomy" id="391295"/>
    <lineage>
        <taxon>Bacteria</taxon>
        <taxon>Bacillati</taxon>
        <taxon>Bacillota</taxon>
        <taxon>Bacilli</taxon>
        <taxon>Lactobacillales</taxon>
        <taxon>Streptococcaceae</taxon>
        <taxon>Streptococcus</taxon>
    </lineage>
</organism>
<name>Y402_STRSY</name>
<gene>
    <name type="ordered locus">SSU05_0402</name>
</gene>
<dbReference type="EMBL" id="CP000407">
    <property type="protein sequence ID" value="ABP89369.1"/>
    <property type="molecule type" value="Genomic_DNA"/>
</dbReference>
<dbReference type="SMR" id="A4VTD0"/>
<dbReference type="STRING" id="391295.SSU05_0402"/>
<dbReference type="KEGG" id="ssu:SSU05_0402"/>
<dbReference type="eggNOG" id="COG0217">
    <property type="taxonomic scope" value="Bacteria"/>
</dbReference>
<dbReference type="HOGENOM" id="CLU_062974_2_0_9"/>
<dbReference type="BioCyc" id="SSUI391295:GHI8-438-MONOMER"/>
<dbReference type="GO" id="GO:0005829">
    <property type="term" value="C:cytosol"/>
    <property type="evidence" value="ECO:0007669"/>
    <property type="project" value="TreeGrafter"/>
</dbReference>
<dbReference type="GO" id="GO:0003677">
    <property type="term" value="F:DNA binding"/>
    <property type="evidence" value="ECO:0007669"/>
    <property type="project" value="UniProtKB-UniRule"/>
</dbReference>
<dbReference type="GO" id="GO:0006355">
    <property type="term" value="P:regulation of DNA-templated transcription"/>
    <property type="evidence" value="ECO:0007669"/>
    <property type="project" value="UniProtKB-UniRule"/>
</dbReference>
<dbReference type="FunFam" id="1.10.10.200:FF:000003">
    <property type="entry name" value="Probable transcriptional regulatory protein YeeN"/>
    <property type="match status" value="1"/>
</dbReference>
<dbReference type="Gene3D" id="1.10.10.200">
    <property type="match status" value="1"/>
</dbReference>
<dbReference type="Gene3D" id="3.30.70.980">
    <property type="match status" value="2"/>
</dbReference>
<dbReference type="HAMAP" id="MF_00693">
    <property type="entry name" value="Transcrip_reg_TACO1"/>
    <property type="match status" value="1"/>
</dbReference>
<dbReference type="HAMAP" id="MF_00918">
    <property type="entry name" value="Transcrip_reg_TACO1_YeeN"/>
    <property type="match status" value="1"/>
</dbReference>
<dbReference type="InterPro" id="IPR017856">
    <property type="entry name" value="Integrase-like_N"/>
</dbReference>
<dbReference type="InterPro" id="IPR048300">
    <property type="entry name" value="TACO1_YebC-like_2nd/3rd_dom"/>
</dbReference>
<dbReference type="InterPro" id="IPR049083">
    <property type="entry name" value="TACO1_YebC_N"/>
</dbReference>
<dbReference type="InterPro" id="IPR002876">
    <property type="entry name" value="Transcrip_reg_TACO1-like"/>
</dbReference>
<dbReference type="InterPro" id="IPR026564">
    <property type="entry name" value="Transcrip_reg_TACO1-like_dom3"/>
</dbReference>
<dbReference type="InterPro" id="IPR026562">
    <property type="entry name" value="Transcrip_reg_TACO1_YeeN"/>
</dbReference>
<dbReference type="InterPro" id="IPR029072">
    <property type="entry name" value="YebC-like"/>
</dbReference>
<dbReference type="NCBIfam" id="NF001030">
    <property type="entry name" value="PRK00110.1"/>
    <property type="match status" value="1"/>
</dbReference>
<dbReference type="NCBIfam" id="NF009044">
    <property type="entry name" value="PRK12378.1"/>
    <property type="match status" value="1"/>
</dbReference>
<dbReference type="NCBIfam" id="TIGR01033">
    <property type="entry name" value="YebC/PmpR family DNA-binding transcriptional regulator"/>
    <property type="match status" value="1"/>
</dbReference>
<dbReference type="PANTHER" id="PTHR12532">
    <property type="entry name" value="TRANSLATIONAL ACTIVATOR OF CYTOCHROME C OXIDASE 1"/>
    <property type="match status" value="1"/>
</dbReference>
<dbReference type="PANTHER" id="PTHR12532:SF0">
    <property type="entry name" value="TRANSLATIONAL ACTIVATOR OF CYTOCHROME C OXIDASE 1"/>
    <property type="match status" value="1"/>
</dbReference>
<dbReference type="Pfam" id="PF20772">
    <property type="entry name" value="TACO1_YebC_N"/>
    <property type="match status" value="1"/>
</dbReference>
<dbReference type="Pfam" id="PF01709">
    <property type="entry name" value="Transcrip_reg"/>
    <property type="match status" value="1"/>
</dbReference>
<dbReference type="SUPFAM" id="SSF75625">
    <property type="entry name" value="YebC-like"/>
    <property type="match status" value="1"/>
</dbReference>
<sequence length="238" mass="25759">MGRKWANIVAKKTAKDGANSKVYAKFGVEIYVAAKKGDPDPETNSALKFVIDRAKQAQVPKHIIDKAIDKAKGNTDETFVEGRYEGFGPNGSMIIVDTLTSNVNRTAANVRSAFGKNGGNMGASGSVSFMFDKKGVVVFAGDDADAIFELLLEADVEVDDVEAEDGTITIYTAPTDLHKAIVALKESGIQEFNVTELEMIPQSEVSLEGDDLATFEKLYDALEDDEDVQKIYTNVDGF</sequence>
<keyword id="KW-0963">Cytoplasm</keyword>
<keyword id="KW-0238">DNA-binding</keyword>
<keyword id="KW-0804">Transcription</keyword>
<keyword id="KW-0805">Transcription regulation</keyword>
<feature type="chain" id="PRO_1000045379" description="Probable transcriptional regulatory protein SSU05_0402">
    <location>
        <begin position="1"/>
        <end position="238"/>
    </location>
</feature>